<gene>
    <name evidence="1" type="primary">fusA</name>
    <name type="ordered locus">SNSL254_A3716</name>
</gene>
<name>EFG_SALNS</name>
<evidence type="ECO:0000255" key="1">
    <source>
        <dbReference type="HAMAP-Rule" id="MF_00054"/>
    </source>
</evidence>
<organism>
    <name type="scientific">Salmonella newport (strain SL254)</name>
    <dbReference type="NCBI Taxonomy" id="423368"/>
    <lineage>
        <taxon>Bacteria</taxon>
        <taxon>Pseudomonadati</taxon>
        <taxon>Pseudomonadota</taxon>
        <taxon>Gammaproteobacteria</taxon>
        <taxon>Enterobacterales</taxon>
        <taxon>Enterobacteriaceae</taxon>
        <taxon>Salmonella</taxon>
    </lineage>
</organism>
<reference key="1">
    <citation type="journal article" date="2011" name="J. Bacteriol.">
        <title>Comparative genomics of 28 Salmonella enterica isolates: evidence for CRISPR-mediated adaptive sublineage evolution.</title>
        <authorList>
            <person name="Fricke W.F."/>
            <person name="Mammel M.K."/>
            <person name="McDermott P.F."/>
            <person name="Tartera C."/>
            <person name="White D.G."/>
            <person name="Leclerc J.E."/>
            <person name="Ravel J."/>
            <person name="Cebula T.A."/>
        </authorList>
    </citation>
    <scope>NUCLEOTIDE SEQUENCE [LARGE SCALE GENOMIC DNA]</scope>
    <source>
        <strain>SL254</strain>
    </source>
</reference>
<feature type="chain" id="PRO_1000091759" description="Elongation factor G">
    <location>
        <begin position="1"/>
        <end position="704"/>
    </location>
</feature>
<feature type="domain" description="tr-type G">
    <location>
        <begin position="8"/>
        <end position="290"/>
    </location>
</feature>
<feature type="binding site" evidence="1">
    <location>
        <begin position="17"/>
        <end position="24"/>
    </location>
    <ligand>
        <name>GTP</name>
        <dbReference type="ChEBI" id="CHEBI:37565"/>
    </ligand>
</feature>
<feature type="binding site" evidence="1">
    <location>
        <begin position="88"/>
        <end position="92"/>
    </location>
    <ligand>
        <name>GTP</name>
        <dbReference type="ChEBI" id="CHEBI:37565"/>
    </ligand>
</feature>
<feature type="binding site" evidence="1">
    <location>
        <begin position="142"/>
        <end position="145"/>
    </location>
    <ligand>
        <name>GTP</name>
        <dbReference type="ChEBI" id="CHEBI:37565"/>
    </ligand>
</feature>
<dbReference type="EMBL" id="CP001113">
    <property type="protein sequence ID" value="ACF62903.1"/>
    <property type="molecule type" value="Genomic_DNA"/>
</dbReference>
<dbReference type="RefSeq" id="WP_000124693.1">
    <property type="nucleotide sequence ID" value="NZ_CCMR01000004.1"/>
</dbReference>
<dbReference type="SMR" id="B4SUU6"/>
<dbReference type="KEGG" id="see:SNSL254_A3716"/>
<dbReference type="HOGENOM" id="CLU_002794_4_1_6"/>
<dbReference type="Proteomes" id="UP000008824">
    <property type="component" value="Chromosome"/>
</dbReference>
<dbReference type="GO" id="GO:0005737">
    <property type="term" value="C:cytoplasm"/>
    <property type="evidence" value="ECO:0007669"/>
    <property type="project" value="UniProtKB-SubCell"/>
</dbReference>
<dbReference type="GO" id="GO:0005525">
    <property type="term" value="F:GTP binding"/>
    <property type="evidence" value="ECO:0007669"/>
    <property type="project" value="UniProtKB-UniRule"/>
</dbReference>
<dbReference type="GO" id="GO:0003924">
    <property type="term" value="F:GTPase activity"/>
    <property type="evidence" value="ECO:0007669"/>
    <property type="project" value="InterPro"/>
</dbReference>
<dbReference type="GO" id="GO:0097216">
    <property type="term" value="F:guanosine tetraphosphate binding"/>
    <property type="evidence" value="ECO:0007669"/>
    <property type="project" value="UniProtKB-ARBA"/>
</dbReference>
<dbReference type="GO" id="GO:0003746">
    <property type="term" value="F:translation elongation factor activity"/>
    <property type="evidence" value="ECO:0007669"/>
    <property type="project" value="UniProtKB-UniRule"/>
</dbReference>
<dbReference type="GO" id="GO:0032790">
    <property type="term" value="P:ribosome disassembly"/>
    <property type="evidence" value="ECO:0007669"/>
    <property type="project" value="TreeGrafter"/>
</dbReference>
<dbReference type="CDD" id="cd01886">
    <property type="entry name" value="EF-G"/>
    <property type="match status" value="1"/>
</dbReference>
<dbReference type="CDD" id="cd16262">
    <property type="entry name" value="EFG_III"/>
    <property type="match status" value="1"/>
</dbReference>
<dbReference type="CDD" id="cd01434">
    <property type="entry name" value="EFG_mtEFG1_IV"/>
    <property type="match status" value="1"/>
</dbReference>
<dbReference type="CDD" id="cd03713">
    <property type="entry name" value="EFG_mtEFG_C"/>
    <property type="match status" value="1"/>
</dbReference>
<dbReference type="CDD" id="cd04088">
    <property type="entry name" value="EFG_mtEFG_II"/>
    <property type="match status" value="1"/>
</dbReference>
<dbReference type="FunFam" id="2.40.30.10:FF:000006">
    <property type="entry name" value="Elongation factor G"/>
    <property type="match status" value="1"/>
</dbReference>
<dbReference type="FunFam" id="3.30.230.10:FF:000003">
    <property type="entry name" value="Elongation factor G"/>
    <property type="match status" value="1"/>
</dbReference>
<dbReference type="FunFam" id="3.30.70.240:FF:000001">
    <property type="entry name" value="Elongation factor G"/>
    <property type="match status" value="1"/>
</dbReference>
<dbReference type="FunFam" id="3.30.70.870:FF:000001">
    <property type="entry name" value="Elongation factor G"/>
    <property type="match status" value="1"/>
</dbReference>
<dbReference type="FunFam" id="3.40.50.300:FF:000029">
    <property type="entry name" value="Elongation factor G"/>
    <property type="match status" value="1"/>
</dbReference>
<dbReference type="Gene3D" id="3.30.230.10">
    <property type="match status" value="1"/>
</dbReference>
<dbReference type="Gene3D" id="3.30.70.240">
    <property type="match status" value="1"/>
</dbReference>
<dbReference type="Gene3D" id="3.30.70.870">
    <property type="entry name" value="Elongation Factor G (Translational Gtpase), domain 3"/>
    <property type="match status" value="1"/>
</dbReference>
<dbReference type="Gene3D" id="3.40.50.300">
    <property type="entry name" value="P-loop containing nucleotide triphosphate hydrolases"/>
    <property type="match status" value="1"/>
</dbReference>
<dbReference type="Gene3D" id="2.40.30.10">
    <property type="entry name" value="Translation factors"/>
    <property type="match status" value="1"/>
</dbReference>
<dbReference type="HAMAP" id="MF_00054_B">
    <property type="entry name" value="EF_G_EF_2_B"/>
    <property type="match status" value="1"/>
</dbReference>
<dbReference type="InterPro" id="IPR041095">
    <property type="entry name" value="EFG_II"/>
</dbReference>
<dbReference type="InterPro" id="IPR009022">
    <property type="entry name" value="EFG_III"/>
</dbReference>
<dbReference type="InterPro" id="IPR035647">
    <property type="entry name" value="EFG_III/V"/>
</dbReference>
<dbReference type="InterPro" id="IPR047872">
    <property type="entry name" value="EFG_IV"/>
</dbReference>
<dbReference type="InterPro" id="IPR035649">
    <property type="entry name" value="EFG_V"/>
</dbReference>
<dbReference type="InterPro" id="IPR000640">
    <property type="entry name" value="EFG_V-like"/>
</dbReference>
<dbReference type="InterPro" id="IPR004161">
    <property type="entry name" value="EFTu-like_2"/>
</dbReference>
<dbReference type="InterPro" id="IPR031157">
    <property type="entry name" value="G_TR_CS"/>
</dbReference>
<dbReference type="InterPro" id="IPR027417">
    <property type="entry name" value="P-loop_NTPase"/>
</dbReference>
<dbReference type="InterPro" id="IPR020568">
    <property type="entry name" value="Ribosomal_Su5_D2-typ_SF"/>
</dbReference>
<dbReference type="InterPro" id="IPR014721">
    <property type="entry name" value="Ribsml_uS5_D2-typ_fold_subgr"/>
</dbReference>
<dbReference type="InterPro" id="IPR005225">
    <property type="entry name" value="Small_GTP-bd"/>
</dbReference>
<dbReference type="InterPro" id="IPR000795">
    <property type="entry name" value="T_Tr_GTP-bd_dom"/>
</dbReference>
<dbReference type="InterPro" id="IPR009000">
    <property type="entry name" value="Transl_B-barrel_sf"/>
</dbReference>
<dbReference type="InterPro" id="IPR004540">
    <property type="entry name" value="Transl_elong_EFG/EF2"/>
</dbReference>
<dbReference type="InterPro" id="IPR005517">
    <property type="entry name" value="Transl_elong_EFG/EF2_IV"/>
</dbReference>
<dbReference type="NCBIfam" id="TIGR00484">
    <property type="entry name" value="EF-G"/>
    <property type="match status" value="1"/>
</dbReference>
<dbReference type="NCBIfam" id="NF009381">
    <property type="entry name" value="PRK12740.1-5"/>
    <property type="match status" value="1"/>
</dbReference>
<dbReference type="NCBIfam" id="TIGR00231">
    <property type="entry name" value="small_GTP"/>
    <property type="match status" value="1"/>
</dbReference>
<dbReference type="PANTHER" id="PTHR43261:SF1">
    <property type="entry name" value="RIBOSOME-RELEASING FACTOR 2, MITOCHONDRIAL"/>
    <property type="match status" value="1"/>
</dbReference>
<dbReference type="PANTHER" id="PTHR43261">
    <property type="entry name" value="TRANSLATION ELONGATION FACTOR G-RELATED"/>
    <property type="match status" value="1"/>
</dbReference>
<dbReference type="Pfam" id="PF00679">
    <property type="entry name" value="EFG_C"/>
    <property type="match status" value="1"/>
</dbReference>
<dbReference type="Pfam" id="PF14492">
    <property type="entry name" value="EFG_III"/>
    <property type="match status" value="1"/>
</dbReference>
<dbReference type="Pfam" id="PF03764">
    <property type="entry name" value="EFG_IV"/>
    <property type="match status" value="1"/>
</dbReference>
<dbReference type="Pfam" id="PF00009">
    <property type="entry name" value="GTP_EFTU"/>
    <property type="match status" value="1"/>
</dbReference>
<dbReference type="Pfam" id="PF03144">
    <property type="entry name" value="GTP_EFTU_D2"/>
    <property type="match status" value="1"/>
</dbReference>
<dbReference type="PRINTS" id="PR00315">
    <property type="entry name" value="ELONGATNFCT"/>
</dbReference>
<dbReference type="SMART" id="SM00838">
    <property type="entry name" value="EFG_C"/>
    <property type="match status" value="1"/>
</dbReference>
<dbReference type="SMART" id="SM00889">
    <property type="entry name" value="EFG_IV"/>
    <property type="match status" value="1"/>
</dbReference>
<dbReference type="SUPFAM" id="SSF54980">
    <property type="entry name" value="EF-G C-terminal domain-like"/>
    <property type="match status" value="2"/>
</dbReference>
<dbReference type="SUPFAM" id="SSF52540">
    <property type="entry name" value="P-loop containing nucleoside triphosphate hydrolases"/>
    <property type="match status" value="1"/>
</dbReference>
<dbReference type="SUPFAM" id="SSF54211">
    <property type="entry name" value="Ribosomal protein S5 domain 2-like"/>
    <property type="match status" value="1"/>
</dbReference>
<dbReference type="SUPFAM" id="SSF50447">
    <property type="entry name" value="Translation proteins"/>
    <property type="match status" value="1"/>
</dbReference>
<dbReference type="PROSITE" id="PS00301">
    <property type="entry name" value="G_TR_1"/>
    <property type="match status" value="1"/>
</dbReference>
<dbReference type="PROSITE" id="PS51722">
    <property type="entry name" value="G_TR_2"/>
    <property type="match status" value="1"/>
</dbReference>
<proteinExistence type="inferred from homology"/>
<comment type="function">
    <text evidence="1">Catalyzes the GTP-dependent ribosomal translocation step during translation elongation. During this step, the ribosome changes from the pre-translocational (PRE) to the post-translocational (POST) state as the newly formed A-site-bound peptidyl-tRNA and P-site-bound deacylated tRNA move to the P and E sites, respectively. Catalyzes the coordinated movement of the two tRNA molecules, the mRNA and conformational changes in the ribosome.</text>
</comment>
<comment type="subcellular location">
    <subcellularLocation>
        <location evidence="1">Cytoplasm</location>
    </subcellularLocation>
</comment>
<comment type="similarity">
    <text evidence="1">Belongs to the TRAFAC class translation factor GTPase superfamily. Classic translation factor GTPase family. EF-G/EF-2 subfamily.</text>
</comment>
<protein>
    <recommendedName>
        <fullName evidence="1">Elongation factor G</fullName>
        <shortName evidence="1">EF-G</shortName>
    </recommendedName>
</protein>
<accession>B4SUU6</accession>
<sequence length="704" mass="77599">MARTTPIARYRNIGISAHIDAGKTTTTERILFYTGVNHKIGEVHDGAATMDWMEQEQERGITITSAATTAFWSGMAKQYEPHRINIIDTPGHVDFTIEVERSMRVLDGAVMVYCAVGGVQPQSETVWRQANKYKVPRIAFVNKMDRMGANFLKVVGQIKTRLGANPVPLQLAIGAEEGFTGVVDLVKMKAINWNDADQGVTFEYEDIPADMQDLANEWHQNLIESAAEASEELMEKYLGGEELTEEEIKQALRQRVLNNEIILVTCGSAFKNKGVQAMLDAVIDYLPSPVDVPAINGILDDGKDTPAERHASDDEPFSALAFKIATDPFVGNLTFFRVYSGVVNSGDTVLNSVKTARERFGRIVQMHANKREEIKEVRAGDIAAAIGLKDVTTGDTLCDPENPIILERMEFPEPVISIAVEPKTKADQEKMGLALGRLAKEDPSFRVWTDEESNQTIIAGMGELHLDIIVDRMKREFNVEANVGKPQVAYREAIRAKVTDIEGKHAKQSGGRGQYGHVVIDMYPLEPGSNPKGYEFINDIKGGVIPGEYIPAVDKGIQEQLKSGPLAGYPVVDLGVRLHFGSYHDVDSSELAFKLAASIAFKEGFKKAKPVLLEPIMKVEVETPEENTGDVIGDLSRRRGMLKGQESEVTGVKIHAEVPLSEMFGYATQLRSLTKGRASYTMEFLKYDDAPNNVAQAVIEARGK</sequence>
<keyword id="KW-0963">Cytoplasm</keyword>
<keyword id="KW-0251">Elongation factor</keyword>
<keyword id="KW-0342">GTP-binding</keyword>
<keyword id="KW-0547">Nucleotide-binding</keyword>
<keyword id="KW-0648">Protein biosynthesis</keyword>